<keyword id="KW-1185">Reference proteome</keyword>
<keyword id="KW-0687">Ribonucleoprotein</keyword>
<keyword id="KW-0689">Ribosomal protein</keyword>
<keyword id="KW-0694">RNA-binding</keyword>
<keyword id="KW-0699">rRNA-binding</keyword>
<comment type="function">
    <text evidence="1">One of the early assembly proteins it binds 23S rRNA. One of the proteins that surrounds the polypeptide exit tunnel on the outside of the ribosome. Forms the main docking site for trigger factor binding to the ribosome.</text>
</comment>
<comment type="subunit">
    <text evidence="1">Part of the 50S ribosomal subunit. Contacts protein L29, and trigger factor when it is bound to the ribosome.</text>
</comment>
<comment type="similarity">
    <text evidence="1">Belongs to the universal ribosomal protein uL23 family.</text>
</comment>
<organism>
    <name type="scientific">Syntrophotalea carbinolica (strain DSM 2380 / NBRC 103641 / GraBd1)</name>
    <name type="common">Pelobacter carbinolicus</name>
    <dbReference type="NCBI Taxonomy" id="338963"/>
    <lineage>
        <taxon>Bacteria</taxon>
        <taxon>Pseudomonadati</taxon>
        <taxon>Thermodesulfobacteriota</taxon>
        <taxon>Desulfuromonadia</taxon>
        <taxon>Desulfuromonadales</taxon>
        <taxon>Syntrophotaleaceae</taxon>
        <taxon>Syntrophotalea</taxon>
    </lineage>
</organism>
<evidence type="ECO:0000255" key="1">
    <source>
        <dbReference type="HAMAP-Rule" id="MF_01369"/>
    </source>
</evidence>
<evidence type="ECO:0000305" key="2"/>
<gene>
    <name evidence="1" type="primary">rplW</name>
    <name type="ordered locus">Pcar_0703</name>
</gene>
<reference key="1">
    <citation type="submission" date="2005-10" db="EMBL/GenBank/DDBJ databases">
        <title>Complete sequence of Pelobacter carbinolicus DSM 2380.</title>
        <authorList>
            <person name="Copeland A."/>
            <person name="Lucas S."/>
            <person name="Lapidus A."/>
            <person name="Barry K."/>
            <person name="Detter J.C."/>
            <person name="Glavina T."/>
            <person name="Hammon N."/>
            <person name="Israni S."/>
            <person name="Pitluck S."/>
            <person name="Chertkov O."/>
            <person name="Schmutz J."/>
            <person name="Larimer F."/>
            <person name="Land M."/>
            <person name="Kyrpides N."/>
            <person name="Ivanova N."/>
            <person name="Richardson P."/>
        </authorList>
    </citation>
    <scope>NUCLEOTIDE SEQUENCE [LARGE SCALE GENOMIC DNA]</scope>
    <source>
        <strain>DSM 2380 / NBRC 103641 / GraBd1</strain>
    </source>
</reference>
<name>RL23_SYNC1</name>
<dbReference type="EMBL" id="CP000142">
    <property type="protein sequence ID" value="ABA87962.1"/>
    <property type="molecule type" value="Genomic_DNA"/>
</dbReference>
<dbReference type="RefSeq" id="WP_011340405.1">
    <property type="nucleotide sequence ID" value="NC_007498.2"/>
</dbReference>
<dbReference type="SMR" id="Q3A6P5"/>
<dbReference type="STRING" id="338963.Pcar_0703"/>
<dbReference type="KEGG" id="pca:Pcar_0703"/>
<dbReference type="eggNOG" id="COG0089">
    <property type="taxonomic scope" value="Bacteria"/>
</dbReference>
<dbReference type="HOGENOM" id="CLU_037562_3_1_7"/>
<dbReference type="OrthoDB" id="9793353at2"/>
<dbReference type="Proteomes" id="UP000002534">
    <property type="component" value="Chromosome"/>
</dbReference>
<dbReference type="GO" id="GO:1990904">
    <property type="term" value="C:ribonucleoprotein complex"/>
    <property type="evidence" value="ECO:0007669"/>
    <property type="project" value="UniProtKB-KW"/>
</dbReference>
<dbReference type="GO" id="GO:0005840">
    <property type="term" value="C:ribosome"/>
    <property type="evidence" value="ECO:0007669"/>
    <property type="project" value="UniProtKB-KW"/>
</dbReference>
<dbReference type="GO" id="GO:0019843">
    <property type="term" value="F:rRNA binding"/>
    <property type="evidence" value="ECO:0007669"/>
    <property type="project" value="UniProtKB-UniRule"/>
</dbReference>
<dbReference type="GO" id="GO:0003735">
    <property type="term" value="F:structural constituent of ribosome"/>
    <property type="evidence" value="ECO:0007669"/>
    <property type="project" value="InterPro"/>
</dbReference>
<dbReference type="GO" id="GO:0006412">
    <property type="term" value="P:translation"/>
    <property type="evidence" value="ECO:0007669"/>
    <property type="project" value="UniProtKB-UniRule"/>
</dbReference>
<dbReference type="FunFam" id="3.30.70.330:FF:000001">
    <property type="entry name" value="50S ribosomal protein L23"/>
    <property type="match status" value="1"/>
</dbReference>
<dbReference type="Gene3D" id="3.30.70.330">
    <property type="match status" value="1"/>
</dbReference>
<dbReference type="HAMAP" id="MF_01369_B">
    <property type="entry name" value="Ribosomal_uL23_B"/>
    <property type="match status" value="1"/>
</dbReference>
<dbReference type="InterPro" id="IPR012677">
    <property type="entry name" value="Nucleotide-bd_a/b_plait_sf"/>
</dbReference>
<dbReference type="InterPro" id="IPR013025">
    <property type="entry name" value="Ribosomal_uL23-like"/>
</dbReference>
<dbReference type="InterPro" id="IPR012678">
    <property type="entry name" value="Ribosomal_uL23/eL15/eS24_sf"/>
</dbReference>
<dbReference type="InterPro" id="IPR001014">
    <property type="entry name" value="Ribosomal_uL23_CS"/>
</dbReference>
<dbReference type="NCBIfam" id="NF004359">
    <property type="entry name" value="PRK05738.1-3"/>
    <property type="match status" value="1"/>
</dbReference>
<dbReference type="NCBIfam" id="NF004363">
    <property type="entry name" value="PRK05738.2-4"/>
    <property type="match status" value="1"/>
</dbReference>
<dbReference type="NCBIfam" id="NF004366">
    <property type="entry name" value="PRK05738.3-2"/>
    <property type="match status" value="1"/>
</dbReference>
<dbReference type="PANTHER" id="PTHR11620">
    <property type="entry name" value="60S RIBOSOMAL PROTEIN L23A"/>
    <property type="match status" value="1"/>
</dbReference>
<dbReference type="Pfam" id="PF00276">
    <property type="entry name" value="Ribosomal_L23"/>
    <property type="match status" value="1"/>
</dbReference>
<dbReference type="SUPFAM" id="SSF54189">
    <property type="entry name" value="Ribosomal proteins S24e, L23 and L15e"/>
    <property type="match status" value="1"/>
</dbReference>
<dbReference type="PROSITE" id="PS00050">
    <property type="entry name" value="RIBOSOMAL_L23"/>
    <property type="match status" value="1"/>
</dbReference>
<sequence>MKPLHEILKRPLVTEKTVQQEGEAQVVAFEVKREANKVEIKKAVEQAFEVKVKNVNTVLVAGKVKRLGRTYGKRSNWKKAYVTLAEGSSIDLFGV</sequence>
<accession>Q3A6P5</accession>
<protein>
    <recommendedName>
        <fullName evidence="1">Large ribosomal subunit protein uL23</fullName>
    </recommendedName>
    <alternativeName>
        <fullName evidence="2">50S ribosomal protein L23</fullName>
    </alternativeName>
</protein>
<feature type="chain" id="PRO_0000272791" description="Large ribosomal subunit protein uL23">
    <location>
        <begin position="1"/>
        <end position="95"/>
    </location>
</feature>
<proteinExistence type="inferred from homology"/>